<gene>
    <name evidence="1" type="primary">trpC</name>
    <name type="ordered locus">BSUIS_A1189</name>
</gene>
<sequence length="268" mass="29255">MSTDILRKIEAYKREEIAAAKARVALDELKARTRDQSAPRGFLKALEAKRAAGQFALIAEIKKASPSKGLIRPDFDPPALAKAYEEGGAACLSVLTDTPSFQGAPEFLTAARQACSLPALRKDFLFDPYQVYEARSWGADCILIIMASVDDDLAKELEDTAFALGMDALIEVHDEAEMERALKLSSRLLGVNNRNLRSFEVNLAVSERLAKMAPSDRLLVGESGIFTHEDCLRLEKSGIGTFLIGESLMRQHDVAAATRALLTGAEKL</sequence>
<comment type="catalytic activity">
    <reaction evidence="1">
        <text>1-(2-carboxyphenylamino)-1-deoxy-D-ribulose 5-phosphate + H(+) = (1S,2R)-1-C-(indol-3-yl)glycerol 3-phosphate + CO2 + H2O</text>
        <dbReference type="Rhea" id="RHEA:23476"/>
        <dbReference type="ChEBI" id="CHEBI:15377"/>
        <dbReference type="ChEBI" id="CHEBI:15378"/>
        <dbReference type="ChEBI" id="CHEBI:16526"/>
        <dbReference type="ChEBI" id="CHEBI:58613"/>
        <dbReference type="ChEBI" id="CHEBI:58866"/>
        <dbReference type="EC" id="4.1.1.48"/>
    </reaction>
</comment>
<comment type="pathway">
    <text evidence="1">Amino-acid biosynthesis; L-tryptophan biosynthesis; L-tryptophan from chorismate: step 4/5.</text>
</comment>
<comment type="similarity">
    <text evidence="1">Belongs to the TrpC family.</text>
</comment>
<keyword id="KW-0028">Amino-acid biosynthesis</keyword>
<keyword id="KW-0057">Aromatic amino acid biosynthesis</keyword>
<keyword id="KW-0210">Decarboxylase</keyword>
<keyword id="KW-0456">Lyase</keyword>
<keyword id="KW-0822">Tryptophan biosynthesis</keyword>
<dbReference type="EC" id="4.1.1.48" evidence="1"/>
<dbReference type="EMBL" id="CP000911">
    <property type="protein sequence ID" value="ABY38240.1"/>
    <property type="molecule type" value="Genomic_DNA"/>
</dbReference>
<dbReference type="RefSeq" id="WP_006070888.1">
    <property type="nucleotide sequence ID" value="NC_010169.1"/>
</dbReference>
<dbReference type="SMR" id="B0CGT9"/>
<dbReference type="KEGG" id="bmt:BSUIS_A1189"/>
<dbReference type="HOGENOM" id="CLU_034247_2_0_5"/>
<dbReference type="UniPathway" id="UPA00035">
    <property type="reaction ID" value="UER00043"/>
</dbReference>
<dbReference type="Proteomes" id="UP000008545">
    <property type="component" value="Chromosome I"/>
</dbReference>
<dbReference type="GO" id="GO:0004425">
    <property type="term" value="F:indole-3-glycerol-phosphate synthase activity"/>
    <property type="evidence" value="ECO:0007669"/>
    <property type="project" value="UniProtKB-UniRule"/>
</dbReference>
<dbReference type="GO" id="GO:0004640">
    <property type="term" value="F:phosphoribosylanthranilate isomerase activity"/>
    <property type="evidence" value="ECO:0007669"/>
    <property type="project" value="TreeGrafter"/>
</dbReference>
<dbReference type="GO" id="GO:0000162">
    <property type="term" value="P:L-tryptophan biosynthetic process"/>
    <property type="evidence" value="ECO:0007669"/>
    <property type="project" value="UniProtKB-UniRule"/>
</dbReference>
<dbReference type="CDD" id="cd00331">
    <property type="entry name" value="IGPS"/>
    <property type="match status" value="1"/>
</dbReference>
<dbReference type="FunFam" id="3.20.20.70:FF:000024">
    <property type="entry name" value="Indole-3-glycerol phosphate synthase"/>
    <property type="match status" value="1"/>
</dbReference>
<dbReference type="Gene3D" id="3.20.20.70">
    <property type="entry name" value="Aldolase class I"/>
    <property type="match status" value="1"/>
</dbReference>
<dbReference type="HAMAP" id="MF_00134_B">
    <property type="entry name" value="IGPS_B"/>
    <property type="match status" value="1"/>
</dbReference>
<dbReference type="InterPro" id="IPR013785">
    <property type="entry name" value="Aldolase_TIM"/>
</dbReference>
<dbReference type="InterPro" id="IPR045186">
    <property type="entry name" value="Indole-3-glycerol_P_synth"/>
</dbReference>
<dbReference type="InterPro" id="IPR013798">
    <property type="entry name" value="Indole-3-glycerol_P_synth_dom"/>
</dbReference>
<dbReference type="InterPro" id="IPR001468">
    <property type="entry name" value="Indole-3-GlycerolPSynthase_CS"/>
</dbReference>
<dbReference type="InterPro" id="IPR011060">
    <property type="entry name" value="RibuloseP-bd_barrel"/>
</dbReference>
<dbReference type="NCBIfam" id="NF001370">
    <property type="entry name" value="PRK00278.1-2"/>
    <property type="match status" value="1"/>
</dbReference>
<dbReference type="NCBIfam" id="NF001373">
    <property type="entry name" value="PRK00278.1-6"/>
    <property type="match status" value="1"/>
</dbReference>
<dbReference type="NCBIfam" id="NF001377">
    <property type="entry name" value="PRK00278.2-4"/>
    <property type="match status" value="1"/>
</dbReference>
<dbReference type="PANTHER" id="PTHR22854:SF2">
    <property type="entry name" value="INDOLE-3-GLYCEROL-PHOSPHATE SYNTHASE"/>
    <property type="match status" value="1"/>
</dbReference>
<dbReference type="PANTHER" id="PTHR22854">
    <property type="entry name" value="TRYPTOPHAN BIOSYNTHESIS PROTEIN"/>
    <property type="match status" value="1"/>
</dbReference>
<dbReference type="Pfam" id="PF00218">
    <property type="entry name" value="IGPS"/>
    <property type="match status" value="1"/>
</dbReference>
<dbReference type="SUPFAM" id="SSF51366">
    <property type="entry name" value="Ribulose-phoshate binding barrel"/>
    <property type="match status" value="1"/>
</dbReference>
<dbReference type="PROSITE" id="PS00614">
    <property type="entry name" value="IGPS"/>
    <property type="match status" value="1"/>
</dbReference>
<protein>
    <recommendedName>
        <fullName evidence="1">Indole-3-glycerol phosphate synthase</fullName>
        <shortName evidence="1">IGPS</shortName>
        <ecNumber evidence="1">4.1.1.48</ecNumber>
    </recommendedName>
</protein>
<evidence type="ECO:0000255" key="1">
    <source>
        <dbReference type="HAMAP-Rule" id="MF_00134"/>
    </source>
</evidence>
<proteinExistence type="inferred from homology"/>
<feature type="chain" id="PRO_1000076415" description="Indole-3-glycerol phosphate synthase">
    <location>
        <begin position="1"/>
        <end position="268"/>
    </location>
</feature>
<accession>B0CGT9</accession>
<organism>
    <name type="scientific">Brucella suis (strain ATCC 23445 / NCTC 10510)</name>
    <dbReference type="NCBI Taxonomy" id="470137"/>
    <lineage>
        <taxon>Bacteria</taxon>
        <taxon>Pseudomonadati</taxon>
        <taxon>Pseudomonadota</taxon>
        <taxon>Alphaproteobacteria</taxon>
        <taxon>Hyphomicrobiales</taxon>
        <taxon>Brucellaceae</taxon>
        <taxon>Brucella/Ochrobactrum group</taxon>
        <taxon>Brucella</taxon>
    </lineage>
</organism>
<name>TRPC_BRUSI</name>
<reference key="1">
    <citation type="submission" date="2007-12" db="EMBL/GenBank/DDBJ databases">
        <title>Brucella suis ATCC 23445 whole genome shotgun sequencing project.</title>
        <authorList>
            <person name="Setubal J.C."/>
            <person name="Bowns C."/>
            <person name="Boyle S."/>
            <person name="Crasta O.R."/>
            <person name="Czar M.J."/>
            <person name="Dharmanolla C."/>
            <person name="Gillespie J.J."/>
            <person name="Kenyon R.W."/>
            <person name="Lu J."/>
            <person name="Mane S."/>
            <person name="Mohapatra S."/>
            <person name="Nagrani S."/>
            <person name="Purkayastha A."/>
            <person name="Rajasimha H.K."/>
            <person name="Shallom J.M."/>
            <person name="Shallom S."/>
            <person name="Shukla M."/>
            <person name="Snyder E.E."/>
            <person name="Sobral B.W."/>
            <person name="Wattam A.R."/>
            <person name="Will R."/>
            <person name="Williams K."/>
            <person name="Yoo H."/>
            <person name="Bruce D."/>
            <person name="Detter C."/>
            <person name="Munk C."/>
            <person name="Brettin T.S."/>
        </authorList>
    </citation>
    <scope>NUCLEOTIDE SEQUENCE [LARGE SCALE GENOMIC DNA]</scope>
    <source>
        <strain>ATCC 23445 / NCTC 10510</strain>
    </source>
</reference>